<evidence type="ECO:0000250" key="1"/>
<protein>
    <recommendedName>
        <fullName>Turripeptide OL127</fullName>
    </recommendedName>
</protein>
<proteinExistence type="evidence at transcript level"/>
<accession>P0DKN5</accession>
<reference key="1">
    <citation type="journal article" date="2006" name="J. Mol. Evol.">
        <title>Genes expressed in a turrid venom duct: divergence and similarity to conotoxins.</title>
        <authorList>
            <person name="Watkins M."/>
            <person name="Hillyard D.R."/>
            <person name="Olivera B.M."/>
        </authorList>
    </citation>
    <scope>NUCLEOTIDE SEQUENCE [MRNA]</scope>
    <source>
        <tissue>Venom duct</tissue>
    </source>
</reference>
<comment type="function">
    <text evidence="1">Acts as a neurotoxin by inhibiting an ion channel.</text>
</comment>
<comment type="subcellular location">
    <subcellularLocation>
        <location evidence="1">Secreted</location>
    </subcellularLocation>
</comment>
<comment type="tissue specificity">
    <text>Expressed by the venom duct.</text>
</comment>
<comment type="domain">
    <text>The cysteine framework is XXII (C-C-C-C-C-C-C-C).</text>
</comment>
<comment type="PTM">
    <text evidence="1">Contains 4 disulfide bonds.</text>
</comment>
<organism>
    <name type="scientific">Iotyrris olangoensis</name>
    <name type="common">Sea snail</name>
    <name type="synonym">Lophiotoma olangoensis</name>
    <dbReference type="NCBI Taxonomy" id="2420066"/>
    <lineage>
        <taxon>Eukaryota</taxon>
        <taxon>Metazoa</taxon>
        <taxon>Spiralia</taxon>
        <taxon>Lophotrochozoa</taxon>
        <taxon>Mollusca</taxon>
        <taxon>Gastropoda</taxon>
        <taxon>Caenogastropoda</taxon>
        <taxon>Neogastropoda</taxon>
        <taxon>Conoidea</taxon>
        <taxon>Turridae</taxon>
        <taxon>Iotyrris</taxon>
    </lineage>
</organism>
<sequence>YYICESCWTCESCAGSTESSCVSACNACDLCPNK</sequence>
<dbReference type="SMR" id="P0DKN5"/>
<dbReference type="GO" id="GO:0005576">
    <property type="term" value="C:extracellular region"/>
    <property type="evidence" value="ECO:0007669"/>
    <property type="project" value="UniProtKB-SubCell"/>
</dbReference>
<dbReference type="GO" id="GO:0099106">
    <property type="term" value="F:ion channel regulator activity"/>
    <property type="evidence" value="ECO:0007669"/>
    <property type="project" value="UniProtKB-KW"/>
</dbReference>
<dbReference type="GO" id="GO:0090729">
    <property type="term" value="F:toxin activity"/>
    <property type="evidence" value="ECO:0007669"/>
    <property type="project" value="UniProtKB-KW"/>
</dbReference>
<feature type="chain" id="PRO_0000419851" description="Turripeptide OL127">
    <location>
        <begin position="1"/>
        <end position="34"/>
    </location>
</feature>
<keyword id="KW-1015">Disulfide bond</keyword>
<keyword id="KW-0872">Ion channel impairing toxin</keyword>
<keyword id="KW-0528">Neurotoxin</keyword>
<keyword id="KW-0964">Secreted</keyword>
<keyword id="KW-0800">Toxin</keyword>
<name>TU127_IOTOL</name>